<organism>
    <name type="scientific">Yersinia pestis bv. Antiqua (strain Angola)</name>
    <dbReference type="NCBI Taxonomy" id="349746"/>
    <lineage>
        <taxon>Bacteria</taxon>
        <taxon>Pseudomonadati</taxon>
        <taxon>Pseudomonadota</taxon>
        <taxon>Gammaproteobacteria</taxon>
        <taxon>Enterobacterales</taxon>
        <taxon>Yersiniaceae</taxon>
        <taxon>Yersinia</taxon>
    </lineage>
</organism>
<evidence type="ECO:0000255" key="1">
    <source>
        <dbReference type="HAMAP-Rule" id="MF_01516"/>
    </source>
</evidence>
<gene>
    <name evidence="1" type="primary">mdh</name>
    <name type="ordered locus">YpAngola_A3971</name>
</gene>
<protein>
    <recommendedName>
        <fullName evidence="1">Malate dehydrogenase</fullName>
        <ecNumber evidence="1">1.1.1.37</ecNumber>
    </recommendedName>
</protein>
<keyword id="KW-0520">NAD</keyword>
<keyword id="KW-0560">Oxidoreductase</keyword>
<keyword id="KW-0816">Tricarboxylic acid cycle</keyword>
<accession>A9R584</accession>
<comment type="function">
    <text evidence="1">Catalyzes the reversible oxidation of malate to oxaloacetate.</text>
</comment>
<comment type="catalytic activity">
    <reaction evidence="1">
        <text>(S)-malate + NAD(+) = oxaloacetate + NADH + H(+)</text>
        <dbReference type="Rhea" id="RHEA:21432"/>
        <dbReference type="ChEBI" id="CHEBI:15378"/>
        <dbReference type="ChEBI" id="CHEBI:15589"/>
        <dbReference type="ChEBI" id="CHEBI:16452"/>
        <dbReference type="ChEBI" id="CHEBI:57540"/>
        <dbReference type="ChEBI" id="CHEBI:57945"/>
        <dbReference type="EC" id="1.1.1.37"/>
    </reaction>
</comment>
<comment type="subunit">
    <text evidence="1">Homodimer.</text>
</comment>
<comment type="similarity">
    <text evidence="1">Belongs to the LDH/MDH superfamily. MDH type 1 family.</text>
</comment>
<feature type="chain" id="PRO_1000191601" description="Malate dehydrogenase">
    <location>
        <begin position="1"/>
        <end position="312"/>
    </location>
</feature>
<feature type="active site" description="Proton acceptor" evidence="1">
    <location>
        <position position="177"/>
    </location>
</feature>
<feature type="binding site" evidence="1">
    <location>
        <begin position="7"/>
        <end position="13"/>
    </location>
    <ligand>
        <name>NAD(+)</name>
        <dbReference type="ChEBI" id="CHEBI:57540"/>
    </ligand>
</feature>
<feature type="binding site" evidence="1">
    <location>
        <position position="34"/>
    </location>
    <ligand>
        <name>NAD(+)</name>
        <dbReference type="ChEBI" id="CHEBI:57540"/>
    </ligand>
</feature>
<feature type="binding site" evidence="1">
    <location>
        <position position="81"/>
    </location>
    <ligand>
        <name>substrate</name>
    </ligand>
</feature>
<feature type="binding site" evidence="1">
    <location>
        <position position="87"/>
    </location>
    <ligand>
        <name>substrate</name>
    </ligand>
</feature>
<feature type="binding site" evidence="1">
    <location>
        <position position="94"/>
    </location>
    <ligand>
        <name>NAD(+)</name>
        <dbReference type="ChEBI" id="CHEBI:57540"/>
    </ligand>
</feature>
<feature type="binding site" evidence="1">
    <location>
        <begin position="117"/>
        <end position="119"/>
    </location>
    <ligand>
        <name>NAD(+)</name>
        <dbReference type="ChEBI" id="CHEBI:57540"/>
    </ligand>
</feature>
<feature type="binding site" evidence="1">
    <location>
        <position position="119"/>
    </location>
    <ligand>
        <name>substrate</name>
    </ligand>
</feature>
<feature type="binding site" evidence="1">
    <location>
        <position position="153"/>
    </location>
    <ligand>
        <name>substrate</name>
    </ligand>
</feature>
<feature type="binding site" evidence="1">
    <location>
        <position position="227"/>
    </location>
    <ligand>
        <name>NAD(+)</name>
        <dbReference type="ChEBI" id="CHEBI:57540"/>
    </ligand>
</feature>
<reference key="1">
    <citation type="journal article" date="2010" name="J. Bacteriol.">
        <title>Genome sequence of the deep-rooted Yersinia pestis strain Angola reveals new insights into the evolution and pangenome of the plague bacterium.</title>
        <authorList>
            <person name="Eppinger M."/>
            <person name="Worsham P.L."/>
            <person name="Nikolich M.P."/>
            <person name="Riley D.R."/>
            <person name="Sebastian Y."/>
            <person name="Mou S."/>
            <person name="Achtman M."/>
            <person name="Lindler L.E."/>
            <person name="Ravel J."/>
        </authorList>
    </citation>
    <scope>NUCLEOTIDE SEQUENCE [LARGE SCALE GENOMIC DNA]</scope>
    <source>
        <strain>Angola</strain>
    </source>
</reference>
<name>MDH_YERPG</name>
<sequence>MKVAVLGAAGGIGQALALLLKTQLPSGSDLSLYDIAPVTPGVAVDLSHIPTAVNIKGFSGEDATPALQGADIVLISAGVARKPGMDRSDLFNVNAGIVRNLVEQIARTCPNALIGIITNPVNTTVAIAAEVLKKAGVYDKNKLFGITTLDTIRSNTFVAELKGKQPQDIEVPVIGGHSGVTILPLLSQIPGVSFTEQEVADLTKRIQNAGTEVVEAKAGGGSATLSMGQAAARFGLSLVRALQGESNVVECSYVEGDGKYARFFAQPILLGKNGVAERKDIGKLSAFEQQALENMLDVLHKDIELGEKFVNQ</sequence>
<proteinExistence type="inferred from homology"/>
<dbReference type="EC" id="1.1.1.37" evidence="1"/>
<dbReference type="EMBL" id="CP000901">
    <property type="protein sequence ID" value="ABX85765.1"/>
    <property type="molecule type" value="Genomic_DNA"/>
</dbReference>
<dbReference type="RefSeq" id="WP_002210174.1">
    <property type="nucleotide sequence ID" value="NZ_CP009935.1"/>
</dbReference>
<dbReference type="SMR" id="A9R584"/>
<dbReference type="GeneID" id="57975198"/>
<dbReference type="KEGG" id="ypg:YpAngola_A3971"/>
<dbReference type="PATRIC" id="fig|349746.12.peg.695"/>
<dbReference type="GO" id="GO:0005737">
    <property type="term" value="C:cytoplasm"/>
    <property type="evidence" value="ECO:0007669"/>
    <property type="project" value="TreeGrafter"/>
</dbReference>
<dbReference type="GO" id="GO:0030060">
    <property type="term" value="F:L-malate dehydrogenase (NAD+) activity"/>
    <property type="evidence" value="ECO:0007669"/>
    <property type="project" value="UniProtKB-UniRule"/>
</dbReference>
<dbReference type="GO" id="GO:0006108">
    <property type="term" value="P:malate metabolic process"/>
    <property type="evidence" value="ECO:0007669"/>
    <property type="project" value="InterPro"/>
</dbReference>
<dbReference type="GO" id="GO:0006099">
    <property type="term" value="P:tricarboxylic acid cycle"/>
    <property type="evidence" value="ECO:0007669"/>
    <property type="project" value="UniProtKB-UniRule"/>
</dbReference>
<dbReference type="CDD" id="cd01337">
    <property type="entry name" value="MDH_glyoxysomal_mitochondrial"/>
    <property type="match status" value="1"/>
</dbReference>
<dbReference type="FunFam" id="3.40.50.720:FF:000017">
    <property type="entry name" value="Malate dehydrogenase"/>
    <property type="match status" value="1"/>
</dbReference>
<dbReference type="FunFam" id="3.90.110.10:FF:000001">
    <property type="entry name" value="Malate dehydrogenase"/>
    <property type="match status" value="1"/>
</dbReference>
<dbReference type="Gene3D" id="3.90.110.10">
    <property type="entry name" value="Lactate dehydrogenase/glycoside hydrolase, family 4, C-terminal"/>
    <property type="match status" value="1"/>
</dbReference>
<dbReference type="Gene3D" id="3.40.50.720">
    <property type="entry name" value="NAD(P)-binding Rossmann-like Domain"/>
    <property type="match status" value="1"/>
</dbReference>
<dbReference type="HAMAP" id="MF_01516">
    <property type="entry name" value="Malate_dehydrog_1"/>
    <property type="match status" value="1"/>
</dbReference>
<dbReference type="InterPro" id="IPR001557">
    <property type="entry name" value="L-lactate/malate_DH"/>
</dbReference>
<dbReference type="InterPro" id="IPR022383">
    <property type="entry name" value="Lactate/malate_DH_C"/>
</dbReference>
<dbReference type="InterPro" id="IPR001236">
    <property type="entry name" value="Lactate/malate_DH_N"/>
</dbReference>
<dbReference type="InterPro" id="IPR015955">
    <property type="entry name" value="Lactate_DH/Glyco_Ohase_4_C"/>
</dbReference>
<dbReference type="InterPro" id="IPR001252">
    <property type="entry name" value="Malate_DH_AS"/>
</dbReference>
<dbReference type="InterPro" id="IPR010097">
    <property type="entry name" value="Malate_DH_type1"/>
</dbReference>
<dbReference type="InterPro" id="IPR023958">
    <property type="entry name" value="Malate_DH_type1_bac"/>
</dbReference>
<dbReference type="InterPro" id="IPR036291">
    <property type="entry name" value="NAD(P)-bd_dom_sf"/>
</dbReference>
<dbReference type="NCBIfam" id="TIGR01772">
    <property type="entry name" value="MDH_euk_gproteo"/>
    <property type="match status" value="1"/>
</dbReference>
<dbReference type="PANTHER" id="PTHR11540">
    <property type="entry name" value="MALATE AND LACTATE DEHYDROGENASE"/>
    <property type="match status" value="1"/>
</dbReference>
<dbReference type="PANTHER" id="PTHR11540:SF16">
    <property type="entry name" value="MALATE DEHYDROGENASE, MITOCHONDRIAL"/>
    <property type="match status" value="1"/>
</dbReference>
<dbReference type="Pfam" id="PF02866">
    <property type="entry name" value="Ldh_1_C"/>
    <property type="match status" value="1"/>
</dbReference>
<dbReference type="Pfam" id="PF00056">
    <property type="entry name" value="Ldh_1_N"/>
    <property type="match status" value="1"/>
</dbReference>
<dbReference type="PIRSF" id="PIRSF000102">
    <property type="entry name" value="Lac_mal_DH"/>
    <property type="match status" value="1"/>
</dbReference>
<dbReference type="SUPFAM" id="SSF56327">
    <property type="entry name" value="LDH C-terminal domain-like"/>
    <property type="match status" value="1"/>
</dbReference>
<dbReference type="SUPFAM" id="SSF51735">
    <property type="entry name" value="NAD(P)-binding Rossmann-fold domains"/>
    <property type="match status" value="1"/>
</dbReference>
<dbReference type="PROSITE" id="PS00068">
    <property type="entry name" value="MDH"/>
    <property type="match status" value="1"/>
</dbReference>